<accession>A6LMU0</accession>
<dbReference type="EC" id="2.4.2.9" evidence="1"/>
<dbReference type="EMBL" id="CP000716">
    <property type="protein sequence ID" value="ABR31241.1"/>
    <property type="molecule type" value="Genomic_DNA"/>
</dbReference>
<dbReference type="RefSeq" id="WP_012057600.1">
    <property type="nucleotide sequence ID" value="NC_009616.1"/>
</dbReference>
<dbReference type="SMR" id="A6LMU0"/>
<dbReference type="STRING" id="391009.Tmel_1394"/>
<dbReference type="KEGG" id="tme:Tmel_1394"/>
<dbReference type="eggNOG" id="COG0035">
    <property type="taxonomic scope" value="Bacteria"/>
</dbReference>
<dbReference type="HOGENOM" id="CLU_067096_2_2_0"/>
<dbReference type="OrthoDB" id="9781675at2"/>
<dbReference type="UniPathway" id="UPA00574">
    <property type="reaction ID" value="UER00636"/>
</dbReference>
<dbReference type="Proteomes" id="UP000001110">
    <property type="component" value="Chromosome"/>
</dbReference>
<dbReference type="GO" id="GO:0005525">
    <property type="term" value="F:GTP binding"/>
    <property type="evidence" value="ECO:0007669"/>
    <property type="project" value="UniProtKB-KW"/>
</dbReference>
<dbReference type="GO" id="GO:0000287">
    <property type="term" value="F:magnesium ion binding"/>
    <property type="evidence" value="ECO:0007669"/>
    <property type="project" value="UniProtKB-UniRule"/>
</dbReference>
<dbReference type="GO" id="GO:0004845">
    <property type="term" value="F:uracil phosphoribosyltransferase activity"/>
    <property type="evidence" value="ECO:0007669"/>
    <property type="project" value="UniProtKB-UniRule"/>
</dbReference>
<dbReference type="GO" id="GO:0044206">
    <property type="term" value="P:UMP salvage"/>
    <property type="evidence" value="ECO:0007669"/>
    <property type="project" value="UniProtKB-UniRule"/>
</dbReference>
<dbReference type="GO" id="GO:0006223">
    <property type="term" value="P:uracil salvage"/>
    <property type="evidence" value="ECO:0007669"/>
    <property type="project" value="InterPro"/>
</dbReference>
<dbReference type="CDD" id="cd06223">
    <property type="entry name" value="PRTases_typeI"/>
    <property type="match status" value="1"/>
</dbReference>
<dbReference type="FunFam" id="3.40.50.2020:FF:000003">
    <property type="entry name" value="Uracil phosphoribosyltransferase"/>
    <property type="match status" value="1"/>
</dbReference>
<dbReference type="Gene3D" id="3.40.50.2020">
    <property type="match status" value="1"/>
</dbReference>
<dbReference type="HAMAP" id="MF_01218_B">
    <property type="entry name" value="Upp_B"/>
    <property type="match status" value="1"/>
</dbReference>
<dbReference type="InterPro" id="IPR000836">
    <property type="entry name" value="PRibTrfase_dom"/>
</dbReference>
<dbReference type="InterPro" id="IPR029057">
    <property type="entry name" value="PRTase-like"/>
</dbReference>
<dbReference type="InterPro" id="IPR034332">
    <property type="entry name" value="Upp_B"/>
</dbReference>
<dbReference type="InterPro" id="IPR050054">
    <property type="entry name" value="UPRTase/APRTase"/>
</dbReference>
<dbReference type="InterPro" id="IPR005765">
    <property type="entry name" value="Ura_phspho_trans"/>
</dbReference>
<dbReference type="NCBIfam" id="NF001097">
    <property type="entry name" value="PRK00129.1"/>
    <property type="match status" value="1"/>
</dbReference>
<dbReference type="NCBIfam" id="TIGR01091">
    <property type="entry name" value="upp"/>
    <property type="match status" value="1"/>
</dbReference>
<dbReference type="PANTHER" id="PTHR32315">
    <property type="entry name" value="ADENINE PHOSPHORIBOSYLTRANSFERASE"/>
    <property type="match status" value="1"/>
</dbReference>
<dbReference type="PANTHER" id="PTHR32315:SF4">
    <property type="entry name" value="URACIL PHOSPHORIBOSYLTRANSFERASE, CHLOROPLASTIC"/>
    <property type="match status" value="1"/>
</dbReference>
<dbReference type="Pfam" id="PF14681">
    <property type="entry name" value="UPRTase"/>
    <property type="match status" value="1"/>
</dbReference>
<dbReference type="SUPFAM" id="SSF53271">
    <property type="entry name" value="PRTase-like"/>
    <property type="match status" value="1"/>
</dbReference>
<keyword id="KW-0021">Allosteric enzyme</keyword>
<keyword id="KW-0328">Glycosyltransferase</keyword>
<keyword id="KW-0342">GTP-binding</keyword>
<keyword id="KW-0460">Magnesium</keyword>
<keyword id="KW-0547">Nucleotide-binding</keyword>
<keyword id="KW-0808">Transferase</keyword>
<comment type="function">
    <text evidence="1">Catalyzes the conversion of uracil and 5-phospho-alpha-D-ribose 1-diphosphate (PRPP) to UMP and diphosphate.</text>
</comment>
<comment type="catalytic activity">
    <reaction evidence="1">
        <text>UMP + diphosphate = 5-phospho-alpha-D-ribose 1-diphosphate + uracil</text>
        <dbReference type="Rhea" id="RHEA:13017"/>
        <dbReference type="ChEBI" id="CHEBI:17568"/>
        <dbReference type="ChEBI" id="CHEBI:33019"/>
        <dbReference type="ChEBI" id="CHEBI:57865"/>
        <dbReference type="ChEBI" id="CHEBI:58017"/>
        <dbReference type="EC" id="2.4.2.9"/>
    </reaction>
</comment>
<comment type="cofactor">
    <cofactor evidence="1">
        <name>Mg(2+)</name>
        <dbReference type="ChEBI" id="CHEBI:18420"/>
    </cofactor>
    <text evidence="1">Binds 1 Mg(2+) ion per subunit. The magnesium is bound as Mg-PRPP.</text>
</comment>
<comment type="activity regulation">
    <text evidence="1">Allosterically activated by GTP.</text>
</comment>
<comment type="pathway">
    <text evidence="1">Pyrimidine metabolism; UMP biosynthesis via salvage pathway; UMP from uracil: step 1/1.</text>
</comment>
<comment type="similarity">
    <text evidence="1">Belongs to the UPRTase family.</text>
</comment>
<sequence length="208" mass="23153">MKINVVDHPLIKHKLTLMRKKDTGPKEFRELLKEITLLIAYEATRHIETFETEIETPLEKTKGHFINDKDVVIIPILRAGLGMSDGILQLLPNASVGHIGIYRDPKTLEAVEYYAKFPKITDNSIVFVLDPMLATGVSSIKALEIVKKNGAKNIILVTLIASPEGTEKVNIEHPDVIIYTASLDKKLNSKGYILPGLGDAGDRLFRTK</sequence>
<feature type="chain" id="PRO_1000053806" description="Uracil phosphoribosyltransferase">
    <location>
        <begin position="1"/>
        <end position="208"/>
    </location>
</feature>
<feature type="binding site" evidence="1">
    <location>
        <position position="78"/>
    </location>
    <ligand>
        <name>5-phospho-alpha-D-ribose 1-diphosphate</name>
        <dbReference type="ChEBI" id="CHEBI:58017"/>
    </ligand>
</feature>
<feature type="binding site" evidence="1">
    <location>
        <position position="103"/>
    </location>
    <ligand>
        <name>5-phospho-alpha-D-ribose 1-diphosphate</name>
        <dbReference type="ChEBI" id="CHEBI:58017"/>
    </ligand>
</feature>
<feature type="binding site" evidence="1">
    <location>
        <begin position="130"/>
        <end position="138"/>
    </location>
    <ligand>
        <name>5-phospho-alpha-D-ribose 1-diphosphate</name>
        <dbReference type="ChEBI" id="CHEBI:58017"/>
    </ligand>
</feature>
<feature type="binding site" evidence="1">
    <location>
        <position position="193"/>
    </location>
    <ligand>
        <name>uracil</name>
        <dbReference type="ChEBI" id="CHEBI:17568"/>
    </ligand>
</feature>
<feature type="binding site" evidence="1">
    <location>
        <begin position="198"/>
        <end position="200"/>
    </location>
    <ligand>
        <name>uracil</name>
        <dbReference type="ChEBI" id="CHEBI:17568"/>
    </ligand>
</feature>
<feature type="binding site" evidence="1">
    <location>
        <position position="199"/>
    </location>
    <ligand>
        <name>5-phospho-alpha-D-ribose 1-diphosphate</name>
        <dbReference type="ChEBI" id="CHEBI:58017"/>
    </ligand>
</feature>
<protein>
    <recommendedName>
        <fullName evidence="1">Uracil phosphoribosyltransferase</fullName>
        <ecNumber evidence="1">2.4.2.9</ecNumber>
    </recommendedName>
    <alternativeName>
        <fullName evidence="1">UMP pyrophosphorylase</fullName>
    </alternativeName>
    <alternativeName>
        <fullName evidence="1">UPRTase</fullName>
    </alternativeName>
</protein>
<proteinExistence type="inferred from homology"/>
<gene>
    <name evidence="1" type="primary">upp</name>
    <name type="ordered locus">Tmel_1394</name>
</gene>
<name>UPP_THEM4</name>
<organism>
    <name type="scientific">Thermosipho melanesiensis (strain DSM 12029 / CIP 104789 / BI429)</name>
    <dbReference type="NCBI Taxonomy" id="391009"/>
    <lineage>
        <taxon>Bacteria</taxon>
        <taxon>Thermotogati</taxon>
        <taxon>Thermotogota</taxon>
        <taxon>Thermotogae</taxon>
        <taxon>Thermotogales</taxon>
        <taxon>Fervidobacteriaceae</taxon>
        <taxon>Thermosipho</taxon>
    </lineage>
</organism>
<reference key="1">
    <citation type="submission" date="2007-05" db="EMBL/GenBank/DDBJ databases">
        <title>Complete sequence of Thermosipho melanesiensis BI429.</title>
        <authorList>
            <consortium name="US DOE Joint Genome Institute"/>
            <person name="Copeland A."/>
            <person name="Lucas S."/>
            <person name="Lapidus A."/>
            <person name="Barry K."/>
            <person name="Glavina del Rio T."/>
            <person name="Dalin E."/>
            <person name="Tice H."/>
            <person name="Pitluck S."/>
            <person name="Chertkov O."/>
            <person name="Brettin T."/>
            <person name="Bruce D."/>
            <person name="Detter J.C."/>
            <person name="Han C."/>
            <person name="Schmutz J."/>
            <person name="Larimer F."/>
            <person name="Land M."/>
            <person name="Hauser L."/>
            <person name="Kyrpides N."/>
            <person name="Mikhailova N."/>
            <person name="Nelson K."/>
            <person name="Gogarten J.P."/>
            <person name="Noll K."/>
            <person name="Richardson P."/>
        </authorList>
    </citation>
    <scope>NUCLEOTIDE SEQUENCE [LARGE SCALE GENOMIC DNA]</scope>
    <source>
        <strain>DSM 12029 / CIP 104789 / BI429</strain>
    </source>
</reference>
<evidence type="ECO:0000255" key="1">
    <source>
        <dbReference type="HAMAP-Rule" id="MF_01218"/>
    </source>
</evidence>